<keyword id="KW-0067">ATP-binding</keyword>
<keyword id="KW-0963">Cytoplasm</keyword>
<keyword id="KW-0315">Glutamine amidotransferase</keyword>
<keyword id="KW-0436">Ligase</keyword>
<keyword id="KW-0460">Magnesium</keyword>
<keyword id="KW-0479">Metal-binding</keyword>
<keyword id="KW-0547">Nucleotide-binding</keyword>
<keyword id="KW-0658">Purine biosynthesis</keyword>
<keyword id="KW-1185">Reference proteome</keyword>
<organism>
    <name type="scientific">Shewanella oneidensis (strain ATCC 700550 / JCM 31522 / CIP 106686 / LMG 19005 / NCIMB 14063 / MR-1)</name>
    <dbReference type="NCBI Taxonomy" id="211586"/>
    <lineage>
        <taxon>Bacteria</taxon>
        <taxon>Pseudomonadati</taxon>
        <taxon>Pseudomonadota</taxon>
        <taxon>Gammaproteobacteria</taxon>
        <taxon>Alteromonadales</taxon>
        <taxon>Shewanellaceae</taxon>
        <taxon>Shewanella</taxon>
    </lineage>
</organism>
<sequence length="1293" mass="140598">MEIIRGAPALSTFRVQKLMEACVSAALPVRQIYAEYVHLADLSELLKPTEREQLEKILTYGPAIEAHTPQGSLLFVTPRPGTISPWSSKATDIAHNCGLGKVKRLERGIAYYVESDTLTAEQQRTLQGLLHDRMVEVVLNDFAKADVLFKRTEPAPFKSVNVLAEGRRALEVANVEMGLALAEDEIDYLVENFVRLNRNPNDIELMMFAQANSEHCRHKIFNADWTIDGKAQPKSLFKMIKNTFEVTPDHVLSAYKDNAAVMEGSVAGRFFPDPNGVYSYHTEPMHVLMKVETHNHPTAISPYPGAATGSGGEIRDEGATGRGSKPKAGLTGFSVSNLKIPGFVQPWEGNYGKPDRIVSALDIMTEGPLGGAAFNNEFGRPALLGYFRTYEQEVSSHNGVEMRGYHKPIMLAGGLGNIREEHVQKGEITVGAKLIVLGGPAMNIGLGGGAASSMASGQSSEDLDFASVQRENPEMERRCQEVIDRCWQLGDKNPIQFIHDVGAGGLSNAFPELVNDGDRGGIFNLRNVPSDEPGMSPLEIWCNESQERYVLSVAAEDLPLFTAICERERAPFAVVGEAIQEQHLTLADSHFDNNPIDLPLEVLLGKAPKMSRNVVSAKAVSPALEQSQIDVKDAVKRVLSLPTVADKTFLITIGDRTVTGLVNRDQMVGPWQVPVADCAVTAASFDTYAGEAMSLGERTPLALLDFGASARMAVAESIMNIAGADIGSFKRIKLSANWMSAAGHPGEDAGLYEAVKAVGEELCPELSLTIPVGKDSMSMKTAWQQDGVNKTVTSPMSLVITAFGVVQDIRNTVTPELRSDKGETSLLLVDLGAGQNRLGGSCLAQVYGELGDVAPDLDDAALLRGFFETMQKLVANKLVIAYHDRSDGGLFTTLVEMAFAGNIGLDIDVEDLQGTDLERLFNEELGAVLQVSRDNAAKIAAQFAIAGVPCHVIGTLADDQCITIKDGAREIFSDTRVALRTVWSETTYRMQAMRDNPACALEEFKLKQDETDLGLTVNLSFDPSEDVAAPYILKGAAPKMAILREQGVNSHVEMAAAFDRAGFESRDVHMSDILSGRISLEEFQGLVACGGFSYGDVLGAGEGWAKSILFNERARNEFSRFFERDSSFALGVCNGCQMLSNLKEIIPGSEHWPRFVRNRSERFEARFSLVEVQQSPSLFFQGMAGSRMPIAVSHGEGHAEFASAQALALAEASGTIALRFVNGKGEIATQYPQNPNGSPNGLTGICTTDGRVTLMMPHPERVFRTVANSWHPDNWGEDSPWMRMFRNARVNLG</sequence>
<reference key="1">
    <citation type="journal article" date="2002" name="Nat. Biotechnol.">
        <title>Genome sequence of the dissimilatory metal ion-reducing bacterium Shewanella oneidensis.</title>
        <authorList>
            <person name="Heidelberg J.F."/>
            <person name="Paulsen I.T."/>
            <person name="Nelson K.E."/>
            <person name="Gaidos E.J."/>
            <person name="Nelson W.C."/>
            <person name="Read T.D."/>
            <person name="Eisen J.A."/>
            <person name="Seshadri R."/>
            <person name="Ward N.L."/>
            <person name="Methe B.A."/>
            <person name="Clayton R.A."/>
            <person name="Meyer T."/>
            <person name="Tsapin A."/>
            <person name="Scott J."/>
            <person name="Beanan M.J."/>
            <person name="Brinkac L.M."/>
            <person name="Daugherty S.C."/>
            <person name="DeBoy R.T."/>
            <person name="Dodson R.J."/>
            <person name="Durkin A.S."/>
            <person name="Haft D.H."/>
            <person name="Kolonay J.F."/>
            <person name="Madupu R."/>
            <person name="Peterson J.D."/>
            <person name="Umayam L.A."/>
            <person name="White O."/>
            <person name="Wolf A.M."/>
            <person name="Vamathevan J.J."/>
            <person name="Weidman J.F."/>
            <person name="Impraim M."/>
            <person name="Lee K."/>
            <person name="Berry K.J."/>
            <person name="Lee C."/>
            <person name="Mueller J."/>
            <person name="Khouri H.M."/>
            <person name="Gill J."/>
            <person name="Utterback T.R."/>
            <person name="McDonald L.A."/>
            <person name="Feldblyum T.V."/>
            <person name="Smith H.O."/>
            <person name="Venter J.C."/>
            <person name="Nealson K.H."/>
            <person name="Fraser C.M."/>
        </authorList>
    </citation>
    <scope>NUCLEOTIDE SEQUENCE [LARGE SCALE GENOMIC DNA]</scope>
    <source>
        <strain>ATCC 700550 / JCM 31522 / CIP 106686 / LMG 19005 / NCIMB 14063 / MR-1</strain>
    </source>
</reference>
<accession>Q8EC57</accession>
<comment type="function">
    <text evidence="1">Phosphoribosylformylglycinamidine synthase involved in the purines biosynthetic pathway. Catalyzes the ATP-dependent conversion of formylglycinamide ribonucleotide (FGAR) and glutamine to yield formylglycinamidine ribonucleotide (FGAM) and glutamate.</text>
</comment>
<comment type="catalytic activity">
    <reaction evidence="1">
        <text>N(2)-formyl-N(1)-(5-phospho-beta-D-ribosyl)glycinamide + L-glutamine + ATP + H2O = 2-formamido-N(1)-(5-O-phospho-beta-D-ribosyl)acetamidine + L-glutamate + ADP + phosphate + H(+)</text>
        <dbReference type="Rhea" id="RHEA:17129"/>
        <dbReference type="ChEBI" id="CHEBI:15377"/>
        <dbReference type="ChEBI" id="CHEBI:15378"/>
        <dbReference type="ChEBI" id="CHEBI:29985"/>
        <dbReference type="ChEBI" id="CHEBI:30616"/>
        <dbReference type="ChEBI" id="CHEBI:43474"/>
        <dbReference type="ChEBI" id="CHEBI:58359"/>
        <dbReference type="ChEBI" id="CHEBI:147286"/>
        <dbReference type="ChEBI" id="CHEBI:147287"/>
        <dbReference type="ChEBI" id="CHEBI:456216"/>
        <dbReference type="EC" id="6.3.5.3"/>
    </reaction>
</comment>
<comment type="pathway">
    <text evidence="1">Purine metabolism; IMP biosynthesis via de novo pathway; 5-amino-1-(5-phospho-D-ribosyl)imidazole from N(2)-formyl-N(1)-(5-phospho-D-ribosyl)glycinamide: step 1/2.</text>
</comment>
<comment type="subunit">
    <text evidence="1">Monomer.</text>
</comment>
<comment type="subcellular location">
    <subcellularLocation>
        <location evidence="1">Cytoplasm</location>
    </subcellularLocation>
</comment>
<comment type="similarity">
    <text evidence="1">In the N-terminal section; belongs to the FGAMS family.</text>
</comment>
<feature type="chain" id="PRO_0000100419" description="Phosphoribosylformylglycinamidine synthase">
    <location>
        <begin position="1"/>
        <end position="1293"/>
    </location>
</feature>
<feature type="domain" description="Glutamine amidotransferase type-1" evidence="1">
    <location>
        <begin position="1040"/>
        <end position="1293"/>
    </location>
</feature>
<feature type="region of interest" description="Disordered" evidence="2">
    <location>
        <begin position="305"/>
        <end position="327"/>
    </location>
</feature>
<feature type="active site" description="Nucleophile" evidence="1">
    <location>
        <position position="1133"/>
    </location>
</feature>
<feature type="active site" evidence="1">
    <location>
        <position position="1258"/>
    </location>
</feature>
<feature type="active site" evidence="1">
    <location>
        <position position="1260"/>
    </location>
</feature>
<feature type="binding site" evidence="1">
    <location>
        <begin position="305"/>
        <end position="316"/>
    </location>
    <ligand>
        <name>ATP</name>
        <dbReference type="ChEBI" id="CHEBI:30616"/>
    </ligand>
</feature>
<feature type="binding site" evidence="1">
    <location>
        <position position="676"/>
    </location>
    <ligand>
        <name>ATP</name>
        <dbReference type="ChEBI" id="CHEBI:30616"/>
    </ligand>
</feature>
<feature type="binding site" evidence="1">
    <location>
        <position position="677"/>
    </location>
    <ligand>
        <name>Mg(2+)</name>
        <dbReference type="ChEBI" id="CHEBI:18420"/>
    </ligand>
</feature>
<feature type="binding site" evidence="1">
    <location>
        <position position="716"/>
    </location>
    <ligand>
        <name>Mg(2+)</name>
        <dbReference type="ChEBI" id="CHEBI:18420"/>
    </ligand>
</feature>
<feature type="binding site" evidence="1">
    <location>
        <position position="720"/>
    </location>
    <ligand>
        <name>Mg(2+)</name>
        <dbReference type="ChEBI" id="CHEBI:18420"/>
    </ligand>
</feature>
<feature type="binding site" evidence="1">
    <location>
        <position position="884"/>
    </location>
    <ligand>
        <name>Mg(2+)</name>
        <dbReference type="ChEBI" id="CHEBI:18420"/>
    </ligand>
</feature>
<feature type="binding site" evidence="1">
    <location>
        <position position="886"/>
    </location>
    <ligand>
        <name>ATP</name>
        <dbReference type="ChEBI" id="CHEBI:30616"/>
    </ligand>
</feature>
<name>PUR4_SHEON</name>
<protein>
    <recommendedName>
        <fullName evidence="1">Phosphoribosylformylglycinamidine synthase</fullName>
        <shortName evidence="1">FGAM synthase</shortName>
        <shortName evidence="1">FGAMS</shortName>
        <ecNumber evidence="1">6.3.5.3</ecNumber>
    </recommendedName>
    <alternativeName>
        <fullName evidence="1">Formylglycinamide ribonucleotide amidotransferase</fullName>
        <shortName evidence="1">FGAR amidotransferase</shortName>
        <shortName evidence="1">FGAR-AT</shortName>
    </alternativeName>
</protein>
<proteinExistence type="inferred from homology"/>
<gene>
    <name evidence="1" type="primary">purL</name>
    <name type="ordered locus">SO_3287</name>
</gene>
<dbReference type="EC" id="6.3.5.3" evidence="1"/>
<dbReference type="EMBL" id="AE014299">
    <property type="protein sequence ID" value="AAN56285.1"/>
    <property type="molecule type" value="Genomic_DNA"/>
</dbReference>
<dbReference type="RefSeq" id="NP_718841.1">
    <property type="nucleotide sequence ID" value="NC_004347.2"/>
</dbReference>
<dbReference type="RefSeq" id="WP_011073168.1">
    <property type="nucleotide sequence ID" value="NC_004347.2"/>
</dbReference>
<dbReference type="SMR" id="Q8EC57"/>
<dbReference type="STRING" id="211586.SO_3287"/>
<dbReference type="PaxDb" id="211586-SO_3287"/>
<dbReference type="KEGG" id="son:SO_3287"/>
<dbReference type="PATRIC" id="fig|211586.12.peg.3192"/>
<dbReference type="eggNOG" id="COG0046">
    <property type="taxonomic scope" value="Bacteria"/>
</dbReference>
<dbReference type="eggNOG" id="COG0047">
    <property type="taxonomic scope" value="Bacteria"/>
</dbReference>
<dbReference type="HOGENOM" id="CLU_001031_0_2_6"/>
<dbReference type="OrthoDB" id="9804441at2"/>
<dbReference type="PhylomeDB" id="Q8EC57"/>
<dbReference type="BioCyc" id="SONE211586:G1GMP-3064-MONOMER"/>
<dbReference type="UniPathway" id="UPA00074">
    <property type="reaction ID" value="UER00128"/>
</dbReference>
<dbReference type="Proteomes" id="UP000008186">
    <property type="component" value="Chromosome"/>
</dbReference>
<dbReference type="GO" id="GO:0005737">
    <property type="term" value="C:cytoplasm"/>
    <property type="evidence" value="ECO:0000318"/>
    <property type="project" value="GO_Central"/>
</dbReference>
<dbReference type="GO" id="GO:0005524">
    <property type="term" value="F:ATP binding"/>
    <property type="evidence" value="ECO:0007669"/>
    <property type="project" value="UniProtKB-UniRule"/>
</dbReference>
<dbReference type="GO" id="GO:0046872">
    <property type="term" value="F:metal ion binding"/>
    <property type="evidence" value="ECO:0007669"/>
    <property type="project" value="UniProtKB-KW"/>
</dbReference>
<dbReference type="GO" id="GO:0004642">
    <property type="term" value="F:phosphoribosylformylglycinamidine synthase activity"/>
    <property type="evidence" value="ECO:0000318"/>
    <property type="project" value="GO_Central"/>
</dbReference>
<dbReference type="GO" id="GO:0006189">
    <property type="term" value="P:'de novo' IMP biosynthetic process"/>
    <property type="evidence" value="ECO:0007669"/>
    <property type="project" value="UniProtKB-UniRule"/>
</dbReference>
<dbReference type="GO" id="GO:0006164">
    <property type="term" value="P:purine nucleotide biosynthetic process"/>
    <property type="evidence" value="ECO:0000318"/>
    <property type="project" value="GO_Central"/>
</dbReference>
<dbReference type="CDD" id="cd01740">
    <property type="entry name" value="GATase1_FGAR_AT"/>
    <property type="match status" value="1"/>
</dbReference>
<dbReference type="CDD" id="cd02203">
    <property type="entry name" value="PurL_repeat1"/>
    <property type="match status" value="1"/>
</dbReference>
<dbReference type="CDD" id="cd02204">
    <property type="entry name" value="PurL_repeat2"/>
    <property type="match status" value="1"/>
</dbReference>
<dbReference type="FunFam" id="1.10.8.750:FF:000002">
    <property type="entry name" value="Phosphoribosylformylglycinamidine synthase"/>
    <property type="match status" value="1"/>
</dbReference>
<dbReference type="FunFam" id="3.30.1330.10:FF:000002">
    <property type="entry name" value="Phosphoribosylformylglycinamidine synthase"/>
    <property type="match status" value="1"/>
</dbReference>
<dbReference type="FunFam" id="3.30.1330.10:FF:000005">
    <property type="entry name" value="Phosphoribosylformylglycinamidine synthase"/>
    <property type="match status" value="1"/>
</dbReference>
<dbReference type="FunFam" id="3.40.50.880:FF:000008">
    <property type="entry name" value="Phosphoribosylformylglycinamidine synthase"/>
    <property type="match status" value="1"/>
</dbReference>
<dbReference type="FunFam" id="3.90.650.10:FF:000002">
    <property type="entry name" value="Phosphoribosylformylglycinamidine synthase"/>
    <property type="match status" value="1"/>
</dbReference>
<dbReference type="FunFam" id="3.90.650.10:FF:000005">
    <property type="entry name" value="Phosphoribosylformylglycinamidine synthase"/>
    <property type="match status" value="1"/>
</dbReference>
<dbReference type="Gene3D" id="3.40.50.880">
    <property type="match status" value="1"/>
</dbReference>
<dbReference type="Gene3D" id="1.10.8.750">
    <property type="entry name" value="Phosphoribosylformylglycinamidine synthase, linker domain"/>
    <property type="match status" value="1"/>
</dbReference>
<dbReference type="Gene3D" id="3.90.650.10">
    <property type="entry name" value="PurM-like C-terminal domain"/>
    <property type="match status" value="2"/>
</dbReference>
<dbReference type="Gene3D" id="3.30.1330.10">
    <property type="entry name" value="PurM-like, N-terminal domain"/>
    <property type="match status" value="2"/>
</dbReference>
<dbReference type="HAMAP" id="MF_00419">
    <property type="entry name" value="PurL_1"/>
    <property type="match status" value="1"/>
</dbReference>
<dbReference type="InterPro" id="IPR029062">
    <property type="entry name" value="Class_I_gatase-like"/>
</dbReference>
<dbReference type="InterPro" id="IPR040707">
    <property type="entry name" value="FGAR-AT_N"/>
</dbReference>
<dbReference type="InterPro" id="IPR055181">
    <property type="entry name" value="FGAR-AT_PurM_N-like"/>
</dbReference>
<dbReference type="InterPro" id="IPR010073">
    <property type="entry name" value="PurL_large"/>
</dbReference>
<dbReference type="InterPro" id="IPR041609">
    <property type="entry name" value="PurL_linker"/>
</dbReference>
<dbReference type="InterPro" id="IPR010918">
    <property type="entry name" value="PurM-like_C_dom"/>
</dbReference>
<dbReference type="InterPro" id="IPR036676">
    <property type="entry name" value="PurM-like_C_sf"/>
</dbReference>
<dbReference type="InterPro" id="IPR036921">
    <property type="entry name" value="PurM-like_N_sf"/>
</dbReference>
<dbReference type="InterPro" id="IPR036604">
    <property type="entry name" value="PurS-like_sf"/>
</dbReference>
<dbReference type="NCBIfam" id="TIGR01735">
    <property type="entry name" value="FGAM_synt"/>
    <property type="match status" value="1"/>
</dbReference>
<dbReference type="NCBIfam" id="NF003672">
    <property type="entry name" value="PRK05297.1"/>
    <property type="match status" value="1"/>
</dbReference>
<dbReference type="PANTHER" id="PTHR10099">
    <property type="entry name" value="PHOSPHORIBOSYLFORMYLGLYCINAMIDINE SYNTHASE"/>
    <property type="match status" value="1"/>
</dbReference>
<dbReference type="PANTHER" id="PTHR10099:SF1">
    <property type="entry name" value="PHOSPHORIBOSYLFORMYLGLYCINAMIDINE SYNTHASE"/>
    <property type="match status" value="1"/>
</dbReference>
<dbReference type="Pfam" id="PF02769">
    <property type="entry name" value="AIRS_C"/>
    <property type="match status" value="2"/>
</dbReference>
<dbReference type="Pfam" id="PF18072">
    <property type="entry name" value="FGAR-AT_linker"/>
    <property type="match status" value="1"/>
</dbReference>
<dbReference type="Pfam" id="PF18076">
    <property type="entry name" value="FGAR-AT_N"/>
    <property type="match status" value="1"/>
</dbReference>
<dbReference type="Pfam" id="PF22689">
    <property type="entry name" value="FGAR-AT_PurM_N-like"/>
    <property type="match status" value="1"/>
</dbReference>
<dbReference type="Pfam" id="PF13507">
    <property type="entry name" value="GATase_5"/>
    <property type="match status" value="1"/>
</dbReference>
<dbReference type="SMART" id="SM01211">
    <property type="entry name" value="GATase_5"/>
    <property type="match status" value="1"/>
</dbReference>
<dbReference type="SUPFAM" id="SSF52317">
    <property type="entry name" value="Class I glutamine amidotransferase-like"/>
    <property type="match status" value="1"/>
</dbReference>
<dbReference type="SUPFAM" id="SSF109736">
    <property type="entry name" value="FGAM synthase PurL, linker domain"/>
    <property type="match status" value="1"/>
</dbReference>
<dbReference type="SUPFAM" id="SSF56042">
    <property type="entry name" value="PurM C-terminal domain-like"/>
    <property type="match status" value="2"/>
</dbReference>
<dbReference type="SUPFAM" id="SSF55326">
    <property type="entry name" value="PurM N-terminal domain-like"/>
    <property type="match status" value="2"/>
</dbReference>
<dbReference type="SUPFAM" id="SSF82697">
    <property type="entry name" value="PurS-like"/>
    <property type="match status" value="1"/>
</dbReference>
<dbReference type="PROSITE" id="PS51273">
    <property type="entry name" value="GATASE_TYPE_1"/>
    <property type="match status" value="1"/>
</dbReference>
<evidence type="ECO:0000255" key="1">
    <source>
        <dbReference type="HAMAP-Rule" id="MF_00419"/>
    </source>
</evidence>
<evidence type="ECO:0000256" key="2">
    <source>
        <dbReference type="SAM" id="MobiDB-lite"/>
    </source>
</evidence>